<comment type="function">
    <text evidence="1">Allows the formation of correctly charged Gln-tRNA(Gln) through the transamidation of misacylated Glu-tRNA(Gln) in organisms which lack glutaminyl-tRNA synthetase. The reaction takes place in the presence of glutamine and ATP through an activated gamma-phospho-Glu-tRNA(Gln).</text>
</comment>
<comment type="catalytic activity">
    <reaction evidence="1">
        <text>L-glutamyl-tRNA(Gln) + L-glutamine + ATP + H2O = L-glutaminyl-tRNA(Gln) + L-glutamate + ADP + phosphate + H(+)</text>
        <dbReference type="Rhea" id="RHEA:17521"/>
        <dbReference type="Rhea" id="RHEA-COMP:9681"/>
        <dbReference type="Rhea" id="RHEA-COMP:9684"/>
        <dbReference type="ChEBI" id="CHEBI:15377"/>
        <dbReference type="ChEBI" id="CHEBI:15378"/>
        <dbReference type="ChEBI" id="CHEBI:29985"/>
        <dbReference type="ChEBI" id="CHEBI:30616"/>
        <dbReference type="ChEBI" id="CHEBI:43474"/>
        <dbReference type="ChEBI" id="CHEBI:58359"/>
        <dbReference type="ChEBI" id="CHEBI:78520"/>
        <dbReference type="ChEBI" id="CHEBI:78521"/>
        <dbReference type="ChEBI" id="CHEBI:456216"/>
        <dbReference type="EC" id="6.3.5.7"/>
    </reaction>
</comment>
<comment type="subunit">
    <text evidence="1">Heterotrimer of A, B and C subunits.</text>
</comment>
<comment type="similarity">
    <text evidence="1">Belongs to the amidase family. GatA subfamily.</text>
</comment>
<protein>
    <recommendedName>
        <fullName evidence="1">Glutamyl-tRNA(Gln) amidotransferase subunit A</fullName>
        <shortName evidence="1">Glu-ADT subunit A</shortName>
        <ecNumber evidence="1">6.3.5.7</ecNumber>
    </recommendedName>
</protein>
<sequence length="485" mass="52040">MELYEQTIHNLQTQLQARQVSSVEITNSFLDRIESTDQSINAFITVTKEQALLDAAAADQRIAAGNCAPLTGIPVALKDIFLTEGVRTTSASKMLDNFIAPYDATAWTRMKSQGAVLLGKLNQDEFAMGSSCENSAFGPTRNPWNKDHIPGGSSGGSAAAIAAQQAVATLGTDTGGSIRQPASHCGCVGLKPTYGRVSRYGVIAYASSLDQVGPMTRDVTDAALLLGVIAGYDPKDSTSVDCPVPDYTAALQQGVKGLTIGLPKEYFIDGLDADVQQAMEQAIAVYRQLGAEFVEVSLPHTNYAVATYYLIATAEASSNLARYEGVRFGHRAKDTAGLIDLMMQSRSEGFGAEVKRRIMLGTYALSSGYYDAYYIKAQKVRTLIQQDFNEAFRSVDLLLTPVAPTPAFRIGEKTADPLQMYLSDIFTIPVNLAGICGISVPAGISSNGLPIGLQLLGRPFGEETILRAAFDFEQATQWHTKKAAL</sequence>
<feature type="chain" id="PRO_1000095136" description="Glutamyl-tRNA(Gln) amidotransferase subunit A">
    <location>
        <begin position="1"/>
        <end position="485"/>
    </location>
</feature>
<feature type="active site" description="Charge relay system" evidence="1">
    <location>
        <position position="78"/>
    </location>
</feature>
<feature type="active site" description="Charge relay system" evidence="1">
    <location>
        <position position="153"/>
    </location>
</feature>
<feature type="active site" description="Acyl-ester intermediate" evidence="1">
    <location>
        <position position="177"/>
    </location>
</feature>
<organism>
    <name type="scientific">Trichlorobacter lovleyi (strain ATCC BAA-1151 / DSM 17278 / SZ)</name>
    <name type="common">Geobacter lovleyi</name>
    <dbReference type="NCBI Taxonomy" id="398767"/>
    <lineage>
        <taxon>Bacteria</taxon>
        <taxon>Pseudomonadati</taxon>
        <taxon>Thermodesulfobacteriota</taxon>
        <taxon>Desulfuromonadia</taxon>
        <taxon>Geobacterales</taxon>
        <taxon>Geobacteraceae</taxon>
        <taxon>Trichlorobacter</taxon>
    </lineage>
</organism>
<name>GATA_TRIL1</name>
<gene>
    <name evidence="1" type="primary">gatA</name>
    <name type="ordered locus">Glov_3193</name>
</gene>
<proteinExistence type="inferred from homology"/>
<dbReference type="EC" id="6.3.5.7" evidence="1"/>
<dbReference type="EMBL" id="CP001089">
    <property type="protein sequence ID" value="ACD96899.1"/>
    <property type="molecule type" value="Genomic_DNA"/>
</dbReference>
<dbReference type="RefSeq" id="WP_012471223.1">
    <property type="nucleotide sequence ID" value="NC_010814.1"/>
</dbReference>
<dbReference type="SMR" id="B3EA24"/>
<dbReference type="STRING" id="398767.Glov_3193"/>
<dbReference type="KEGG" id="glo:Glov_3193"/>
<dbReference type="eggNOG" id="COG0154">
    <property type="taxonomic scope" value="Bacteria"/>
</dbReference>
<dbReference type="HOGENOM" id="CLU_009600_0_3_7"/>
<dbReference type="OrthoDB" id="9811471at2"/>
<dbReference type="Proteomes" id="UP000002420">
    <property type="component" value="Chromosome"/>
</dbReference>
<dbReference type="GO" id="GO:0030956">
    <property type="term" value="C:glutamyl-tRNA(Gln) amidotransferase complex"/>
    <property type="evidence" value="ECO:0007669"/>
    <property type="project" value="InterPro"/>
</dbReference>
<dbReference type="GO" id="GO:0005524">
    <property type="term" value="F:ATP binding"/>
    <property type="evidence" value="ECO:0007669"/>
    <property type="project" value="UniProtKB-KW"/>
</dbReference>
<dbReference type="GO" id="GO:0050567">
    <property type="term" value="F:glutaminyl-tRNA synthase (glutamine-hydrolyzing) activity"/>
    <property type="evidence" value="ECO:0007669"/>
    <property type="project" value="UniProtKB-UniRule"/>
</dbReference>
<dbReference type="GO" id="GO:0006412">
    <property type="term" value="P:translation"/>
    <property type="evidence" value="ECO:0007669"/>
    <property type="project" value="UniProtKB-UniRule"/>
</dbReference>
<dbReference type="Gene3D" id="3.90.1300.10">
    <property type="entry name" value="Amidase signature (AS) domain"/>
    <property type="match status" value="1"/>
</dbReference>
<dbReference type="HAMAP" id="MF_00120">
    <property type="entry name" value="GatA"/>
    <property type="match status" value="1"/>
</dbReference>
<dbReference type="InterPro" id="IPR000120">
    <property type="entry name" value="Amidase"/>
</dbReference>
<dbReference type="InterPro" id="IPR020556">
    <property type="entry name" value="Amidase_CS"/>
</dbReference>
<dbReference type="InterPro" id="IPR023631">
    <property type="entry name" value="Amidase_dom"/>
</dbReference>
<dbReference type="InterPro" id="IPR036928">
    <property type="entry name" value="AS_sf"/>
</dbReference>
<dbReference type="InterPro" id="IPR004412">
    <property type="entry name" value="GatA"/>
</dbReference>
<dbReference type="NCBIfam" id="TIGR00132">
    <property type="entry name" value="gatA"/>
    <property type="match status" value="1"/>
</dbReference>
<dbReference type="PANTHER" id="PTHR11895:SF151">
    <property type="entry name" value="GLUTAMYL-TRNA(GLN) AMIDOTRANSFERASE SUBUNIT A"/>
    <property type="match status" value="1"/>
</dbReference>
<dbReference type="PANTHER" id="PTHR11895">
    <property type="entry name" value="TRANSAMIDASE"/>
    <property type="match status" value="1"/>
</dbReference>
<dbReference type="Pfam" id="PF01425">
    <property type="entry name" value="Amidase"/>
    <property type="match status" value="1"/>
</dbReference>
<dbReference type="SUPFAM" id="SSF75304">
    <property type="entry name" value="Amidase signature (AS) enzymes"/>
    <property type="match status" value="1"/>
</dbReference>
<dbReference type="PROSITE" id="PS00571">
    <property type="entry name" value="AMIDASES"/>
    <property type="match status" value="1"/>
</dbReference>
<accession>B3EA24</accession>
<reference key="1">
    <citation type="submission" date="2008-05" db="EMBL/GenBank/DDBJ databases">
        <title>Complete sequence of chromosome of Geobacter lovleyi SZ.</title>
        <authorList>
            <consortium name="US DOE Joint Genome Institute"/>
            <person name="Lucas S."/>
            <person name="Copeland A."/>
            <person name="Lapidus A."/>
            <person name="Glavina del Rio T."/>
            <person name="Dalin E."/>
            <person name="Tice H."/>
            <person name="Bruce D."/>
            <person name="Goodwin L."/>
            <person name="Pitluck S."/>
            <person name="Chertkov O."/>
            <person name="Meincke L."/>
            <person name="Brettin T."/>
            <person name="Detter J.C."/>
            <person name="Han C."/>
            <person name="Tapia R."/>
            <person name="Kuske C.R."/>
            <person name="Schmutz J."/>
            <person name="Larimer F."/>
            <person name="Land M."/>
            <person name="Hauser L."/>
            <person name="Kyrpides N."/>
            <person name="Mikhailova N."/>
            <person name="Sung Y."/>
            <person name="Fletcher K.E."/>
            <person name="Ritalahti K.M."/>
            <person name="Loeffler F.E."/>
            <person name="Richardson P."/>
        </authorList>
    </citation>
    <scope>NUCLEOTIDE SEQUENCE [LARGE SCALE GENOMIC DNA]</scope>
    <source>
        <strain>ATCC BAA-1151 / DSM 17278 / SZ</strain>
    </source>
</reference>
<evidence type="ECO:0000255" key="1">
    <source>
        <dbReference type="HAMAP-Rule" id="MF_00120"/>
    </source>
</evidence>
<keyword id="KW-0067">ATP-binding</keyword>
<keyword id="KW-0436">Ligase</keyword>
<keyword id="KW-0547">Nucleotide-binding</keyword>
<keyword id="KW-0648">Protein biosynthesis</keyword>
<keyword id="KW-1185">Reference proteome</keyword>